<feature type="chain" id="PRO_0000177065" description="Translational regulator CsrA">
    <location>
        <begin position="1"/>
        <end position="61"/>
    </location>
</feature>
<dbReference type="EMBL" id="BX950851">
    <property type="protein sequence ID" value="CAG76264.1"/>
    <property type="molecule type" value="Genomic_DNA"/>
</dbReference>
<dbReference type="RefSeq" id="WP_005972168.1">
    <property type="nucleotide sequence ID" value="NC_004547.2"/>
</dbReference>
<dbReference type="SMR" id="Q6D1T1"/>
<dbReference type="STRING" id="218491.ECA3366"/>
<dbReference type="GeneID" id="97765890"/>
<dbReference type="KEGG" id="eca:ECA3366"/>
<dbReference type="eggNOG" id="COG1551">
    <property type="taxonomic scope" value="Bacteria"/>
</dbReference>
<dbReference type="HOGENOM" id="CLU_164837_2_1_6"/>
<dbReference type="OrthoDB" id="9809061at2"/>
<dbReference type="Proteomes" id="UP000007966">
    <property type="component" value="Chromosome"/>
</dbReference>
<dbReference type="GO" id="GO:0005829">
    <property type="term" value="C:cytosol"/>
    <property type="evidence" value="ECO:0007669"/>
    <property type="project" value="TreeGrafter"/>
</dbReference>
<dbReference type="GO" id="GO:0048027">
    <property type="term" value="F:mRNA 5'-UTR binding"/>
    <property type="evidence" value="ECO:0007669"/>
    <property type="project" value="UniProtKB-UniRule"/>
</dbReference>
<dbReference type="GO" id="GO:0006402">
    <property type="term" value="P:mRNA catabolic process"/>
    <property type="evidence" value="ECO:0007669"/>
    <property type="project" value="InterPro"/>
</dbReference>
<dbReference type="GO" id="GO:0045947">
    <property type="term" value="P:negative regulation of translational initiation"/>
    <property type="evidence" value="ECO:0007669"/>
    <property type="project" value="UniProtKB-UniRule"/>
</dbReference>
<dbReference type="GO" id="GO:0045948">
    <property type="term" value="P:positive regulation of translational initiation"/>
    <property type="evidence" value="ECO:0007669"/>
    <property type="project" value="UniProtKB-UniRule"/>
</dbReference>
<dbReference type="GO" id="GO:0006109">
    <property type="term" value="P:regulation of carbohydrate metabolic process"/>
    <property type="evidence" value="ECO:0007669"/>
    <property type="project" value="UniProtKB-UniRule"/>
</dbReference>
<dbReference type="FunFam" id="2.60.40.4380:FF:000001">
    <property type="entry name" value="Translational regulator CsrA"/>
    <property type="match status" value="1"/>
</dbReference>
<dbReference type="Gene3D" id="2.60.40.4380">
    <property type="entry name" value="Translational regulator CsrA"/>
    <property type="match status" value="1"/>
</dbReference>
<dbReference type="HAMAP" id="MF_00167">
    <property type="entry name" value="CsrA"/>
    <property type="match status" value="1"/>
</dbReference>
<dbReference type="InterPro" id="IPR003751">
    <property type="entry name" value="CsrA"/>
</dbReference>
<dbReference type="InterPro" id="IPR036107">
    <property type="entry name" value="CsrA_sf"/>
</dbReference>
<dbReference type="NCBIfam" id="TIGR00202">
    <property type="entry name" value="csrA"/>
    <property type="match status" value="1"/>
</dbReference>
<dbReference type="NCBIfam" id="NF002469">
    <property type="entry name" value="PRK01712.1"/>
    <property type="match status" value="1"/>
</dbReference>
<dbReference type="PANTHER" id="PTHR34984">
    <property type="entry name" value="CARBON STORAGE REGULATOR"/>
    <property type="match status" value="1"/>
</dbReference>
<dbReference type="PANTHER" id="PTHR34984:SF1">
    <property type="entry name" value="CARBON STORAGE REGULATOR"/>
    <property type="match status" value="1"/>
</dbReference>
<dbReference type="Pfam" id="PF02599">
    <property type="entry name" value="CsrA"/>
    <property type="match status" value="1"/>
</dbReference>
<dbReference type="SUPFAM" id="SSF117130">
    <property type="entry name" value="CsrA-like"/>
    <property type="match status" value="1"/>
</dbReference>
<keyword id="KW-0010">Activator</keyword>
<keyword id="KW-0963">Cytoplasm</keyword>
<keyword id="KW-1185">Reference proteome</keyword>
<keyword id="KW-0694">RNA-binding</keyword>
<keyword id="KW-0810">Translation regulation</keyword>
<comment type="function">
    <text evidence="2">A key translational regulator that binds mRNA to regulate translation initiation and/or mRNA stability. Mediates global changes in gene expression, shifting from rapid growth to stress survival by linking envelope stress, the stringent response and the catabolite repression systems. Usually binds in the 5'-UTR; binding at or near the Shine-Dalgarno sequence prevents ribosome-binding, repressing translation, binding elsewhere in the 5'-UTR can activate translation and/or stabilize the mRNA. Its function is antagonized by small RNA(s).</text>
</comment>
<comment type="function">
    <text evidence="1">Could accelerate the degradation of some genes transcripts potentially through selective RNA binding. Controls extracellular enzymes, N-(3-oxohexanoyl)-L-homoserine lactone, and pathogenicity (By similarity). Repressor of virulence factors (By similarity).</text>
</comment>
<comment type="subunit">
    <text evidence="2">Homodimer; the beta-strands of each monomer intercalate to form a hydrophobic core, while the alpha-helices form wings that extend away from the core.</text>
</comment>
<comment type="subcellular location">
    <subcellularLocation>
        <location evidence="2">Cytoplasm</location>
    </subcellularLocation>
</comment>
<comment type="similarity">
    <text evidence="2">Belongs to the CsrA/RsmA family.</text>
</comment>
<reference key="1">
    <citation type="journal article" date="2004" name="Proc. Natl. Acad. Sci. U.S.A.">
        <title>Genome sequence of the enterobacterial phytopathogen Erwinia carotovora subsp. atroseptica and characterization of virulence factors.</title>
        <authorList>
            <person name="Bell K.S."/>
            <person name="Sebaihia M."/>
            <person name="Pritchard L."/>
            <person name="Holden M.T.G."/>
            <person name="Hyman L.J."/>
            <person name="Holeva M.C."/>
            <person name="Thomson N.R."/>
            <person name="Bentley S.D."/>
            <person name="Churcher L.J.C."/>
            <person name="Mungall K."/>
            <person name="Atkin R."/>
            <person name="Bason N."/>
            <person name="Brooks K."/>
            <person name="Chillingworth T."/>
            <person name="Clark K."/>
            <person name="Doggett J."/>
            <person name="Fraser A."/>
            <person name="Hance Z."/>
            <person name="Hauser H."/>
            <person name="Jagels K."/>
            <person name="Moule S."/>
            <person name="Norbertczak H."/>
            <person name="Ormond D."/>
            <person name="Price C."/>
            <person name="Quail M.A."/>
            <person name="Sanders M."/>
            <person name="Walker D."/>
            <person name="Whitehead S."/>
            <person name="Salmond G.P.C."/>
            <person name="Birch P.R.J."/>
            <person name="Parkhill J."/>
            <person name="Toth I.K."/>
        </authorList>
    </citation>
    <scope>NUCLEOTIDE SEQUENCE [LARGE SCALE GENOMIC DNA]</scope>
    <source>
        <strain>SCRI 1043 / ATCC BAA-672</strain>
    </source>
</reference>
<organism>
    <name type="scientific">Pectobacterium atrosepticum (strain SCRI 1043 / ATCC BAA-672)</name>
    <name type="common">Erwinia carotovora subsp. atroseptica</name>
    <dbReference type="NCBI Taxonomy" id="218491"/>
    <lineage>
        <taxon>Bacteria</taxon>
        <taxon>Pseudomonadati</taxon>
        <taxon>Pseudomonadota</taxon>
        <taxon>Gammaproteobacteria</taxon>
        <taxon>Enterobacterales</taxon>
        <taxon>Pectobacteriaceae</taxon>
        <taxon>Pectobacterium</taxon>
    </lineage>
</organism>
<accession>Q6D1T1</accession>
<gene>
    <name evidence="2" type="primary">csrA</name>
    <name type="synonym">rsmA</name>
    <name type="ordered locus">ECA3366</name>
</gene>
<proteinExistence type="inferred from homology"/>
<protein>
    <recommendedName>
        <fullName evidence="2">Translational regulator CsrA</fullName>
    </recommendedName>
    <alternativeName>
        <fullName evidence="2">Carbon storage regulator</fullName>
    </alternativeName>
</protein>
<name>CSRA_PECAS</name>
<sequence length="61" mass="6839">MLILTRRVGETLMIGDEVTVTVLGVKGNQVRIGVNAPKEVSVHREEIYQRIQAEKSQPTSY</sequence>
<evidence type="ECO:0000250" key="1">
    <source>
        <dbReference type="UniProtKB" id="P0DKY7"/>
    </source>
</evidence>
<evidence type="ECO:0000255" key="2">
    <source>
        <dbReference type="HAMAP-Rule" id="MF_00167"/>
    </source>
</evidence>